<proteinExistence type="inferred from homology"/>
<name>ENDX_PSEFA</name>
<reference key="1">
    <citation type="submission" date="1999-05" db="EMBL/GenBank/DDBJ databases">
        <title>Cloning, sequence analysis, and gene expression of the P. fluorescens gene (ansB) encoding periplasmatic glutaminase/asparaginase.</title>
        <authorList>
            <person name="Hueser A."/>
            <person name="Kloeppner U."/>
            <person name="Roehm K.H."/>
        </authorList>
    </citation>
    <scope>NUCLEOTIDE SEQUENCE [GENOMIC DNA]</scope>
    <source>
        <strain>ATCC 13525 / DSM 50090 / JCM 5963 / NBRC 14160 / NCIMB 9046 / NCTC 10038 / VKM B-894</strain>
    </source>
</reference>
<sequence length="229" mass="25329">MSARFIAVFCLFFTVTAHAQAPRTFSEAKKVAWKLYAPQSTEFYCGCKYNGNRVDLKACGYVPRKNANRADASNGNTSSRPGRSGISASAGKPVGAKTVRATTTCSSAPRRTCTTWCRASVRSMATVTTSVLDGCRCNVGKYGSCLTQVDFKAKKVMPRPSIRGMIARTYFYMSKQYGLRLSKQDRQLYEAWNKTYPVQPWERQRNQTVACVMGRGNEFVGPVNLKACG</sequence>
<organism>
    <name type="scientific">Pseudomonas fluorescens biotype A</name>
    <dbReference type="NCBI Taxonomy" id="32035"/>
    <lineage>
        <taxon>Bacteria</taxon>
        <taxon>Pseudomonadati</taxon>
        <taxon>Pseudomonadota</taxon>
        <taxon>Gammaproteobacteria</taxon>
        <taxon>Pseudomonadales</taxon>
        <taxon>Pseudomonadaceae</taxon>
        <taxon>Pseudomonas</taxon>
    </lineage>
</organism>
<comment type="subcellular location">
    <subcellularLocation>
        <location>Secreted</location>
    </subcellularLocation>
</comment>
<comment type="similarity">
    <text evidence="3">Belongs to the EndA/NucM nuclease family.</text>
</comment>
<gene>
    <name type="primary">endX</name>
</gene>
<keyword id="KW-0255">Endonuclease</keyword>
<keyword id="KW-0378">Hydrolase</keyword>
<keyword id="KW-0540">Nuclease</keyword>
<keyword id="KW-0964">Secreted</keyword>
<keyword id="KW-0732">Signal</keyword>
<accession>Q9WVZ1</accession>
<dbReference type="EC" id="3.1.21.-"/>
<dbReference type="EMBL" id="AJ238711">
    <property type="protein sequence ID" value="CAB44360.1"/>
    <property type="molecule type" value="Genomic_DNA"/>
</dbReference>
<dbReference type="EMBL" id="AJ238710">
    <property type="protein sequence ID" value="CAB44359.1"/>
    <property type="molecule type" value="Genomic_DNA"/>
</dbReference>
<dbReference type="SMR" id="Q9WVZ1"/>
<dbReference type="GO" id="GO:0005576">
    <property type="term" value="C:extracellular region"/>
    <property type="evidence" value="ECO:0007669"/>
    <property type="project" value="UniProtKB-SubCell"/>
</dbReference>
<dbReference type="GO" id="GO:0004519">
    <property type="term" value="F:endonuclease activity"/>
    <property type="evidence" value="ECO:0007669"/>
    <property type="project" value="UniProtKB-KW"/>
</dbReference>
<dbReference type="InterPro" id="IPR007346">
    <property type="entry name" value="Endonuclease-I"/>
</dbReference>
<dbReference type="InterPro" id="IPR044925">
    <property type="entry name" value="His-Me_finger_sf"/>
</dbReference>
<dbReference type="PANTHER" id="PTHR33607">
    <property type="entry name" value="ENDONUCLEASE-1"/>
    <property type="match status" value="1"/>
</dbReference>
<dbReference type="PANTHER" id="PTHR33607:SF2">
    <property type="entry name" value="ENDONUCLEASE-1"/>
    <property type="match status" value="1"/>
</dbReference>
<dbReference type="Pfam" id="PF04231">
    <property type="entry name" value="Endonuclease_1"/>
    <property type="match status" value="1"/>
</dbReference>
<dbReference type="SUPFAM" id="SSF54060">
    <property type="entry name" value="His-Me finger endonucleases"/>
    <property type="match status" value="1"/>
</dbReference>
<feature type="signal peptide" evidence="1">
    <location>
        <begin position="1"/>
        <end position="19"/>
    </location>
</feature>
<feature type="chain" id="PRO_0000007829" description="Extracellular endonuclease">
    <location>
        <begin position="20"/>
        <end position="229"/>
    </location>
</feature>
<feature type="region of interest" description="Disordered" evidence="2">
    <location>
        <begin position="69"/>
        <end position="95"/>
    </location>
</feature>
<feature type="compositionally biased region" description="Polar residues" evidence="2">
    <location>
        <begin position="71"/>
        <end position="81"/>
    </location>
</feature>
<evidence type="ECO:0000255" key="1"/>
<evidence type="ECO:0000256" key="2">
    <source>
        <dbReference type="SAM" id="MobiDB-lite"/>
    </source>
</evidence>
<evidence type="ECO:0000305" key="3"/>
<protein>
    <recommendedName>
        <fullName>Extracellular endonuclease</fullName>
        <ecNumber>3.1.21.-</ecNumber>
    </recommendedName>
</protein>